<accession>Q5JIL7</accession>
<proteinExistence type="inferred from homology"/>
<protein>
    <recommendedName>
        <fullName evidence="1">Alanine--tRNA ligase</fullName>
        <ecNumber evidence="1">6.1.1.7</ecNumber>
    </recommendedName>
    <alternativeName>
        <fullName evidence="1">Alanyl-tRNA synthetase</fullName>
        <shortName evidence="1">AlaRS</shortName>
    </alternativeName>
</protein>
<dbReference type="EC" id="6.1.1.7" evidence="1"/>
<dbReference type="EMBL" id="AP006878">
    <property type="protein sequence ID" value="BAD85756.1"/>
    <property type="molecule type" value="Genomic_DNA"/>
</dbReference>
<dbReference type="RefSeq" id="WP_011250518.1">
    <property type="nucleotide sequence ID" value="NC_006624.1"/>
</dbReference>
<dbReference type="SMR" id="Q5JIL7"/>
<dbReference type="FunCoup" id="Q5JIL7">
    <property type="interactions" value="171"/>
</dbReference>
<dbReference type="STRING" id="69014.TK1567"/>
<dbReference type="EnsemblBacteria" id="BAD85756">
    <property type="protein sequence ID" value="BAD85756"/>
    <property type="gene ID" value="TK1567"/>
</dbReference>
<dbReference type="GeneID" id="78448095"/>
<dbReference type="KEGG" id="tko:TK1567"/>
<dbReference type="PATRIC" id="fig|69014.16.peg.1527"/>
<dbReference type="eggNOG" id="arCOG01255">
    <property type="taxonomic scope" value="Archaea"/>
</dbReference>
<dbReference type="HOGENOM" id="CLU_004485_4_0_2"/>
<dbReference type="InParanoid" id="Q5JIL7"/>
<dbReference type="OrthoDB" id="7506at2157"/>
<dbReference type="PhylomeDB" id="Q5JIL7"/>
<dbReference type="Proteomes" id="UP000000536">
    <property type="component" value="Chromosome"/>
</dbReference>
<dbReference type="GO" id="GO:0005737">
    <property type="term" value="C:cytoplasm"/>
    <property type="evidence" value="ECO:0007669"/>
    <property type="project" value="UniProtKB-SubCell"/>
</dbReference>
<dbReference type="GO" id="GO:0004813">
    <property type="term" value="F:alanine-tRNA ligase activity"/>
    <property type="evidence" value="ECO:0000318"/>
    <property type="project" value="GO_Central"/>
</dbReference>
<dbReference type="GO" id="GO:0002161">
    <property type="term" value="F:aminoacyl-tRNA deacylase activity"/>
    <property type="evidence" value="ECO:0000318"/>
    <property type="project" value="GO_Central"/>
</dbReference>
<dbReference type="GO" id="GO:0005524">
    <property type="term" value="F:ATP binding"/>
    <property type="evidence" value="ECO:0007669"/>
    <property type="project" value="UniProtKB-UniRule"/>
</dbReference>
<dbReference type="GO" id="GO:0000049">
    <property type="term" value="F:tRNA binding"/>
    <property type="evidence" value="ECO:0007669"/>
    <property type="project" value="UniProtKB-KW"/>
</dbReference>
<dbReference type="GO" id="GO:0008270">
    <property type="term" value="F:zinc ion binding"/>
    <property type="evidence" value="ECO:0007669"/>
    <property type="project" value="UniProtKB-UniRule"/>
</dbReference>
<dbReference type="GO" id="GO:0006419">
    <property type="term" value="P:alanyl-tRNA aminoacylation"/>
    <property type="evidence" value="ECO:0000318"/>
    <property type="project" value="GO_Central"/>
</dbReference>
<dbReference type="CDD" id="cd00673">
    <property type="entry name" value="AlaRS_core"/>
    <property type="match status" value="1"/>
</dbReference>
<dbReference type="FunFam" id="2.40.30.130:FF:000010">
    <property type="entry name" value="Alanine--tRNA ligase"/>
    <property type="match status" value="1"/>
</dbReference>
<dbReference type="FunFam" id="3.10.310.40:FF:000001">
    <property type="entry name" value="Alanine--tRNA ligase"/>
    <property type="match status" value="1"/>
</dbReference>
<dbReference type="FunFam" id="3.30.54.20:FF:000005">
    <property type="entry name" value="Alanine--tRNA ligase"/>
    <property type="match status" value="1"/>
</dbReference>
<dbReference type="FunFam" id="3.30.930.10:FF:000056">
    <property type="entry name" value="Alanine--tRNA ligase"/>
    <property type="match status" value="1"/>
</dbReference>
<dbReference type="FunFam" id="3.30.980.10:FF:000002">
    <property type="entry name" value="Alanine--tRNA ligase"/>
    <property type="match status" value="1"/>
</dbReference>
<dbReference type="Gene3D" id="2.40.30.130">
    <property type="match status" value="1"/>
</dbReference>
<dbReference type="Gene3D" id="3.10.310.40">
    <property type="match status" value="1"/>
</dbReference>
<dbReference type="Gene3D" id="3.30.54.20">
    <property type="match status" value="1"/>
</dbReference>
<dbReference type="Gene3D" id="6.10.250.550">
    <property type="match status" value="1"/>
</dbReference>
<dbReference type="Gene3D" id="3.30.930.10">
    <property type="entry name" value="Bira Bifunctional Protein, Domain 2"/>
    <property type="match status" value="1"/>
</dbReference>
<dbReference type="Gene3D" id="3.30.980.10">
    <property type="entry name" value="Threonyl-trna Synthetase, Chain A, domain 2"/>
    <property type="match status" value="1"/>
</dbReference>
<dbReference type="HAMAP" id="MF_00036_A">
    <property type="entry name" value="Ala_tRNA_synth_A"/>
    <property type="match status" value="1"/>
</dbReference>
<dbReference type="InterPro" id="IPR045864">
    <property type="entry name" value="aa-tRNA-synth_II/BPL/LPL"/>
</dbReference>
<dbReference type="InterPro" id="IPR002318">
    <property type="entry name" value="Ala-tRNA-lgiase_IIc"/>
</dbReference>
<dbReference type="InterPro" id="IPR018162">
    <property type="entry name" value="Ala-tRNA-ligase_IIc_anticod-bd"/>
</dbReference>
<dbReference type="InterPro" id="IPR018165">
    <property type="entry name" value="Ala-tRNA-synth_IIc_core"/>
</dbReference>
<dbReference type="InterPro" id="IPR018164">
    <property type="entry name" value="Ala-tRNA-synth_IIc_N"/>
</dbReference>
<dbReference type="InterPro" id="IPR022429">
    <property type="entry name" value="Ala-tRNA_lgiase_arc"/>
</dbReference>
<dbReference type="InterPro" id="IPR050058">
    <property type="entry name" value="Ala-tRNA_ligase"/>
</dbReference>
<dbReference type="InterPro" id="IPR003156">
    <property type="entry name" value="DHHA1_dom"/>
</dbReference>
<dbReference type="InterPro" id="IPR018163">
    <property type="entry name" value="Thr/Ala-tRNA-synth_IIc_edit"/>
</dbReference>
<dbReference type="InterPro" id="IPR009000">
    <property type="entry name" value="Transl_B-barrel_sf"/>
</dbReference>
<dbReference type="InterPro" id="IPR012947">
    <property type="entry name" value="tRNA_SAD"/>
</dbReference>
<dbReference type="NCBIfam" id="TIGR03683">
    <property type="entry name" value="A-tRNA_syn_arch"/>
    <property type="match status" value="1"/>
</dbReference>
<dbReference type="NCBIfam" id="TIGR00344">
    <property type="entry name" value="alaS"/>
    <property type="match status" value="1"/>
</dbReference>
<dbReference type="PANTHER" id="PTHR11777:SF9">
    <property type="entry name" value="ALANINE--TRNA LIGASE, CYTOPLASMIC"/>
    <property type="match status" value="1"/>
</dbReference>
<dbReference type="PANTHER" id="PTHR11777">
    <property type="entry name" value="ALANYL-TRNA SYNTHETASE"/>
    <property type="match status" value="1"/>
</dbReference>
<dbReference type="Pfam" id="PF02272">
    <property type="entry name" value="DHHA1"/>
    <property type="match status" value="1"/>
</dbReference>
<dbReference type="Pfam" id="PF01411">
    <property type="entry name" value="tRNA-synt_2c"/>
    <property type="match status" value="1"/>
</dbReference>
<dbReference type="Pfam" id="PF07973">
    <property type="entry name" value="tRNA_SAD"/>
    <property type="match status" value="1"/>
</dbReference>
<dbReference type="PRINTS" id="PR00980">
    <property type="entry name" value="TRNASYNTHALA"/>
</dbReference>
<dbReference type="SMART" id="SM00863">
    <property type="entry name" value="tRNA_SAD"/>
    <property type="match status" value="1"/>
</dbReference>
<dbReference type="SUPFAM" id="SSF55681">
    <property type="entry name" value="Class II aaRS and biotin synthetases"/>
    <property type="match status" value="1"/>
</dbReference>
<dbReference type="SUPFAM" id="SSF101353">
    <property type="entry name" value="Putative anticodon-binding domain of alanyl-tRNA synthetase (AlaRS)"/>
    <property type="match status" value="1"/>
</dbReference>
<dbReference type="SUPFAM" id="SSF55186">
    <property type="entry name" value="ThrRS/AlaRS common domain"/>
    <property type="match status" value="1"/>
</dbReference>
<dbReference type="SUPFAM" id="SSF50447">
    <property type="entry name" value="Translation proteins"/>
    <property type="match status" value="1"/>
</dbReference>
<dbReference type="PROSITE" id="PS50860">
    <property type="entry name" value="AA_TRNA_LIGASE_II_ALA"/>
    <property type="match status" value="1"/>
</dbReference>
<keyword id="KW-0030">Aminoacyl-tRNA synthetase</keyword>
<keyword id="KW-0067">ATP-binding</keyword>
<keyword id="KW-0963">Cytoplasm</keyword>
<keyword id="KW-0436">Ligase</keyword>
<keyword id="KW-0479">Metal-binding</keyword>
<keyword id="KW-0547">Nucleotide-binding</keyword>
<keyword id="KW-0648">Protein biosynthesis</keyword>
<keyword id="KW-1185">Reference proteome</keyword>
<keyword id="KW-0694">RNA-binding</keyword>
<keyword id="KW-0820">tRNA-binding</keyword>
<keyword id="KW-0862">Zinc</keyword>
<sequence length="917" mass="104882">MSMDMTTRMFKEEGWIRKKCPKCGKYFWTLDPDRETCGDPPCDEYQFIGKPGIPKKYTLDEMREKFLSFFEKHESYPHGRVKRYPVLPRWRDDVLLVGASIMDFQPWVISGEADPPANPLTISQPSIRFTDIDNVGITGRHFTIFEMMAHHAFNYPGKPIYWMDETVELAFEFFTKELKMKPEDITFKENPWAGGGNAGPAFEVLYRGLEVATLVFMQYKKAPADADPSQVVEIKGDYYVPMETRVVDTGYGLERLVWMSHGTPTAYDAVLGYVIEPLKKMAGVEKIDERILMENSRLAGMFDIEDMGDLRYLREQVAKRVGISVEELEKAVRPYELIYAIADHTKALTFMLADGVIPSNVKAGYLARLLIRKSIRHLRELGLEIPLAEIVAMHIKELSPTFPEFKEMEDVILDIINVEEKRYAETLRRGSDLVKREIAKLKKKGINELPLEKLILFYESHGLTPEIVAEVAEKEGIKVNIPDNFYTLVAKEAEKQAEKKEAAEYVVDFELVKDLPDTRTLYYEDPFMKEFDARVLKVIADWVVLDQTAFYPEGGGQPYDTGVLEVNGEKVKVTNVQKVGKVILHKVEKPELFKEGVTVHGRLDWDRRIQHMRHHTGTHVLMGALVRVLGKHVWQAGSQLHTDWARLDISHYKRITEEELREIERLANRVVMENRKVTWEWLPRTEAEMKYGFRLYQGGVVPGRVIRVLKIEDWDVQACGGTHLPNTGLIGPIKILRTERIQDGVERIIFAAGEAAINWMQETERLLKRTAEIFRVPPEKVPETAERFFNEWKEARKEVEKLRKELAKLLVYELQEKVEKVGNVEFIGAVVEGTIDDLREAANRLRKENRVVVLISREGHFVVAVGDGLDLKAGELAKVITSVAGGGGGGRKELAQGRIKNPLKAEEAIEEVKKMLG</sequence>
<gene>
    <name evidence="1" type="primary">alaS</name>
    <name type="ordered locus">TK1567</name>
</gene>
<name>SYA_THEKO</name>
<evidence type="ECO:0000255" key="1">
    <source>
        <dbReference type="HAMAP-Rule" id="MF_00036"/>
    </source>
</evidence>
<feature type="chain" id="PRO_0000075275" description="Alanine--tRNA ligase">
    <location>
        <begin position="1"/>
        <end position="917"/>
    </location>
</feature>
<feature type="binding site" evidence="1">
    <location>
        <position position="615"/>
    </location>
    <ligand>
        <name>Zn(2+)</name>
        <dbReference type="ChEBI" id="CHEBI:29105"/>
    </ligand>
</feature>
<feature type="binding site" evidence="1">
    <location>
        <position position="619"/>
    </location>
    <ligand>
        <name>Zn(2+)</name>
        <dbReference type="ChEBI" id="CHEBI:29105"/>
    </ligand>
</feature>
<feature type="binding site" evidence="1">
    <location>
        <position position="719"/>
    </location>
    <ligand>
        <name>Zn(2+)</name>
        <dbReference type="ChEBI" id="CHEBI:29105"/>
    </ligand>
</feature>
<feature type="binding site" evidence="1">
    <location>
        <position position="723"/>
    </location>
    <ligand>
        <name>Zn(2+)</name>
        <dbReference type="ChEBI" id="CHEBI:29105"/>
    </ligand>
</feature>
<reference key="1">
    <citation type="journal article" date="2005" name="Genome Res.">
        <title>Complete genome sequence of the hyperthermophilic archaeon Thermococcus kodakaraensis KOD1 and comparison with Pyrococcus genomes.</title>
        <authorList>
            <person name="Fukui T."/>
            <person name="Atomi H."/>
            <person name="Kanai T."/>
            <person name="Matsumi R."/>
            <person name="Fujiwara S."/>
            <person name="Imanaka T."/>
        </authorList>
    </citation>
    <scope>NUCLEOTIDE SEQUENCE [LARGE SCALE GENOMIC DNA]</scope>
    <source>
        <strain>ATCC BAA-918 / JCM 12380 / KOD1</strain>
    </source>
</reference>
<organism>
    <name type="scientific">Thermococcus kodakarensis (strain ATCC BAA-918 / JCM 12380 / KOD1)</name>
    <name type="common">Pyrococcus kodakaraensis (strain KOD1)</name>
    <dbReference type="NCBI Taxonomy" id="69014"/>
    <lineage>
        <taxon>Archaea</taxon>
        <taxon>Methanobacteriati</taxon>
        <taxon>Methanobacteriota</taxon>
        <taxon>Thermococci</taxon>
        <taxon>Thermococcales</taxon>
        <taxon>Thermococcaceae</taxon>
        <taxon>Thermococcus</taxon>
    </lineage>
</organism>
<comment type="function">
    <text evidence="1">Catalyzes the attachment of alanine to tRNA(Ala) in a two-step reaction: alanine is first activated by ATP to form Ala-AMP and then transferred to the acceptor end of tRNA(Ala). Also edits incorrectly charged Ser-tRNA(Ala) and Gly-tRNA(Ala) via its editing domain.</text>
</comment>
<comment type="catalytic activity">
    <reaction evidence="1">
        <text>tRNA(Ala) + L-alanine + ATP = L-alanyl-tRNA(Ala) + AMP + diphosphate</text>
        <dbReference type="Rhea" id="RHEA:12540"/>
        <dbReference type="Rhea" id="RHEA-COMP:9657"/>
        <dbReference type="Rhea" id="RHEA-COMP:9923"/>
        <dbReference type="ChEBI" id="CHEBI:30616"/>
        <dbReference type="ChEBI" id="CHEBI:33019"/>
        <dbReference type="ChEBI" id="CHEBI:57972"/>
        <dbReference type="ChEBI" id="CHEBI:78442"/>
        <dbReference type="ChEBI" id="CHEBI:78497"/>
        <dbReference type="ChEBI" id="CHEBI:456215"/>
        <dbReference type="EC" id="6.1.1.7"/>
    </reaction>
</comment>
<comment type="cofactor">
    <cofactor evidence="1">
        <name>Zn(2+)</name>
        <dbReference type="ChEBI" id="CHEBI:29105"/>
    </cofactor>
    <text evidence="1">Binds 1 zinc ion per subunit.</text>
</comment>
<comment type="subcellular location">
    <subcellularLocation>
        <location evidence="1">Cytoplasm</location>
    </subcellularLocation>
</comment>
<comment type="domain">
    <text evidence="1">Consists of three domains; the N-terminal catalytic domain, the editing domain and the C-terminal C-Ala domain. The editing domain removes incorrectly charged amino acids, while the C-Ala domain, along with tRNA(Ala), serves as a bridge to cooperatively bring together the editing and aminoacylation centers thus stimulating deacylation of misacylated tRNAs.</text>
</comment>
<comment type="similarity">
    <text evidence="1">Belongs to the class-II aminoacyl-tRNA synthetase family.</text>
</comment>